<comment type="function">
    <text evidence="3">Binds to nonmethylated 5'-d(CGG)(n)-3' trinucleotide repeats in the FMR1 promoter. May play a role in regulating FMR1 promoter.</text>
</comment>
<comment type="interaction">
    <interactant intactId="EBI-723153">
        <id>Q9UFW8</id>
    </interactant>
    <interactant intactId="EBI-12006120">
        <id>A0A087WZT3</id>
        <label>BOLA2-SMG1P6</label>
    </interactant>
    <organismsDiffer>false</organismsDiffer>
    <experiments>3</experiments>
</comment>
<comment type="interaction">
    <interactant intactId="EBI-723153">
        <id>Q9UFW8</id>
    </interactant>
    <interactant intactId="EBI-295634">
        <id>Q16543</id>
        <label>CDC37</label>
    </interactant>
    <organismsDiffer>false</organismsDiffer>
    <experiments>3</experiments>
</comment>
<comment type="interaction">
    <interactant intactId="EBI-723153">
        <id>Q9UFW8</id>
    </interactant>
    <interactant intactId="EBI-745859">
        <id>P55273</id>
        <label>CDKN2D</label>
    </interactant>
    <organismsDiffer>false</organismsDiffer>
    <experiments>3</experiments>
</comment>
<comment type="interaction">
    <interactant intactId="EBI-723153">
        <id>Q9UFW8</id>
    </interactant>
    <interactant intactId="EBI-723153">
        <id>Q9UFW8</id>
        <label>CGGBP1</label>
    </interactant>
    <organismsDiffer>false</organismsDiffer>
    <experiments>4</experiments>
</comment>
<comment type="interaction">
    <interactant intactId="EBI-723153">
        <id>Q9UFW8</id>
    </interactant>
    <interactant intactId="EBI-744506">
        <id>Q86V42</id>
        <label>FAM124A</label>
    </interactant>
    <organismsDiffer>false</organismsDiffer>
    <experiments>3</experiments>
</comment>
<comment type="interaction">
    <interactant intactId="EBI-723153">
        <id>Q9UFW8</id>
    </interactant>
    <interactant intactId="EBI-374781">
        <id>O76003</id>
        <label>GLRX3</label>
    </interactant>
    <organismsDiffer>false</organismsDiffer>
    <experiments>3</experiments>
</comment>
<comment type="interaction">
    <interactant intactId="EBI-723153">
        <id>Q9UFW8</id>
    </interactant>
    <interactant intactId="EBI-739467">
        <id>Q9H8Y8</id>
        <label>GORASP2</label>
    </interactant>
    <organismsDiffer>false</organismsDiffer>
    <experiments>3</experiments>
</comment>
<comment type="interaction">
    <interactant intactId="EBI-723153">
        <id>Q9UFW8</id>
    </interactant>
    <interactant intactId="EBI-5454865">
        <id>Q6IN84</id>
        <label>MRM1</label>
    </interactant>
    <organismsDiffer>false</organismsDiffer>
    <experiments>7</experiments>
</comment>
<comment type="interaction">
    <interactant intactId="EBI-723153">
        <id>Q9UFW8</id>
    </interactant>
    <interactant intactId="EBI-741158">
        <id>Q96HA8</id>
        <label>NTAQ1</label>
    </interactant>
    <organismsDiffer>false</organismsDiffer>
    <experiments>3</experiments>
</comment>
<comment type="interaction">
    <interactant intactId="EBI-723153">
        <id>Q9UFW8</id>
    </interactant>
    <interactant intactId="EBI-747278">
        <id>P26367</id>
        <label>PAX6</label>
    </interactant>
    <organismsDiffer>false</organismsDiffer>
    <experiments>3</experiments>
</comment>
<comment type="interaction">
    <interactant intactId="EBI-723153">
        <id>Q9UFW8</id>
    </interactant>
    <interactant intactId="EBI-348567">
        <id>O75928-2</id>
        <label>PIAS2</label>
    </interactant>
    <organismsDiffer>false</organismsDiffer>
    <experiments>3</experiments>
</comment>
<comment type="interaction">
    <interactant intactId="EBI-723153">
        <id>Q9UFW8</id>
    </interactant>
    <interactant intactId="EBI-79165">
        <id>Q9NRD5</id>
        <label>PICK1</label>
    </interactant>
    <organismsDiffer>false</organismsDiffer>
    <experiments>3</experiments>
</comment>
<comment type="interaction">
    <interactant intactId="EBI-723153">
        <id>Q9UFW8</id>
    </interactant>
    <interactant intactId="EBI-1055079">
        <id>O15160</id>
        <label>POLR1C</label>
    </interactant>
    <organismsDiffer>false</organismsDiffer>
    <experiments>3</experiments>
</comment>
<comment type="interaction">
    <interactant intactId="EBI-723153">
        <id>Q9UFW8</id>
    </interactant>
    <interactant intactId="EBI-307352">
        <id>Q04864</id>
        <label>REL</label>
    </interactant>
    <organismsDiffer>false</organismsDiffer>
    <experiments>4</experiments>
</comment>
<comment type="interaction">
    <interactant intactId="EBI-723153">
        <id>Q9UFW8</id>
    </interactant>
    <interactant intactId="EBI-10829018">
        <id>Q04864-2</id>
        <label>REL</label>
    </interactant>
    <organismsDiffer>false</organismsDiffer>
    <experiments>3</experiments>
</comment>
<comment type="interaction">
    <interactant intactId="EBI-723153">
        <id>Q9UFW8</id>
    </interactant>
    <interactant intactId="EBI-727004">
        <id>O00560</id>
        <label>SDCBP</label>
    </interactant>
    <organismsDiffer>false</organismsDiffer>
    <experiments>3</experiments>
</comment>
<comment type="interaction">
    <interactant intactId="EBI-723153">
        <id>Q9UFW8</id>
    </interactant>
    <interactant intactId="EBI-2932492">
        <id>Q99757</id>
        <label>TXN2</label>
    </interactant>
    <organismsDiffer>false</organismsDiffer>
    <experiments>3</experiments>
</comment>
<comment type="subcellular location">
    <subcellularLocation>
        <location evidence="3">Nucleus</location>
    </subcellularLocation>
</comment>
<comment type="tissue specificity">
    <text evidence="2">Ubiquitous. Highly expressed in placenta, thymus, lymph nodes, cerebellum and cerebral cortex. Low expression in other regions of the brain.</text>
</comment>
<comment type="developmental stage">
    <text evidence="2">Expressed in fetal brain and kidney. Lower expression in fetal liver and lung.</text>
</comment>
<comment type="miscellaneous">
    <text>Binding is severely inhibited by complete or partial cytosine-specific DNA methylation of the binding motif.</text>
</comment>
<comment type="sequence caution" evidence="4">
    <conflict type="frameshift">
        <sequence resource="EMBL-CDS" id="CAB55894"/>
    </conflict>
</comment>
<organism>
    <name type="scientific">Homo sapiens</name>
    <name type="common">Human</name>
    <dbReference type="NCBI Taxonomy" id="9606"/>
    <lineage>
        <taxon>Eukaryota</taxon>
        <taxon>Metazoa</taxon>
        <taxon>Chordata</taxon>
        <taxon>Craniata</taxon>
        <taxon>Vertebrata</taxon>
        <taxon>Euteleostomi</taxon>
        <taxon>Mammalia</taxon>
        <taxon>Eutheria</taxon>
        <taxon>Euarchontoglires</taxon>
        <taxon>Primates</taxon>
        <taxon>Haplorrhini</taxon>
        <taxon>Catarrhini</taxon>
        <taxon>Hominidae</taxon>
        <taxon>Homo</taxon>
    </lineage>
</organism>
<reference key="1">
    <citation type="journal article" date="1997" name="J. Biol. Chem.">
        <title>Rapid protein sequencing by tandem mass spectrometry and cDNA cloning of p20-CGGBP. A novel protein that binds to the unstable triplet repeat 5'-d(CGG)n-3' in the human FMR1 gene.</title>
        <authorList>
            <person name="Deissler H."/>
            <person name="Wilm M."/>
            <person name="Genc B."/>
            <person name="Schmitz B."/>
            <person name="Ternes T."/>
            <person name="Naumann F."/>
            <person name="Mann M."/>
            <person name="Doerfler W."/>
        </authorList>
    </citation>
    <scope>NUCLEOTIDE SEQUENCE [MRNA]</scope>
    <scope>PROTEIN SEQUENCE OF 4-12; 17-26 AND 101-109</scope>
    <scope>FUNCTION</scope>
    <scope>SUBCELLULAR LOCATION</scope>
    <scope>IDENTIFICATION BY MASS SPECTROMETRY</scope>
    <source>
        <tissue>Melanocyte</tissue>
    </source>
</reference>
<reference key="2">
    <citation type="journal article" date="2004" name="Genomics">
        <title>Gene structure and expression of the 5'-(CGG)(n)-3'-binding protein (CGGBP1).</title>
        <authorList>
            <person name="Naumann F."/>
            <person name="Remus R."/>
            <person name="Schmitz B."/>
            <person name="Doerfler W."/>
        </authorList>
    </citation>
    <scope>NUCLEOTIDE SEQUENCE [GENOMIC DNA]</scope>
    <scope>TISSUE SPECIFICITY</scope>
    <scope>DEVELOPMENTAL STAGE</scope>
</reference>
<reference key="3">
    <citation type="submission" date="2004-06" db="EMBL/GenBank/DDBJ databases">
        <title>Cloning of human full open reading frames in Gateway(TM) system entry vector (pDONR201).</title>
        <authorList>
            <person name="Ebert L."/>
            <person name="Schick M."/>
            <person name="Neubert P."/>
            <person name="Schatten R."/>
            <person name="Henze S."/>
            <person name="Korn B."/>
        </authorList>
    </citation>
    <scope>NUCLEOTIDE SEQUENCE [LARGE SCALE MRNA]</scope>
</reference>
<reference key="4">
    <citation type="submission" date="2005-09" db="EMBL/GenBank/DDBJ databases">
        <authorList>
            <person name="Mural R.J."/>
            <person name="Istrail S."/>
            <person name="Sutton G.G."/>
            <person name="Florea L."/>
            <person name="Halpern A.L."/>
            <person name="Mobarry C.M."/>
            <person name="Lippert R."/>
            <person name="Walenz B."/>
            <person name="Shatkay H."/>
            <person name="Dew I."/>
            <person name="Miller J.R."/>
            <person name="Flanigan M.J."/>
            <person name="Edwards N.J."/>
            <person name="Bolanos R."/>
            <person name="Fasulo D."/>
            <person name="Halldorsson B.V."/>
            <person name="Hannenhalli S."/>
            <person name="Turner R."/>
            <person name="Yooseph S."/>
            <person name="Lu F."/>
            <person name="Nusskern D.R."/>
            <person name="Shue B.C."/>
            <person name="Zheng X.H."/>
            <person name="Zhong F."/>
            <person name="Delcher A.L."/>
            <person name="Huson D.H."/>
            <person name="Kravitz S.A."/>
            <person name="Mouchard L."/>
            <person name="Reinert K."/>
            <person name="Remington K.A."/>
            <person name="Clark A.G."/>
            <person name="Waterman M.S."/>
            <person name="Eichler E.E."/>
            <person name="Adams M.D."/>
            <person name="Hunkapiller M.W."/>
            <person name="Myers E.W."/>
            <person name="Venter J.C."/>
        </authorList>
    </citation>
    <scope>NUCLEOTIDE SEQUENCE [LARGE SCALE GENOMIC DNA]</scope>
</reference>
<reference key="5">
    <citation type="journal article" date="2007" name="BMC Genomics">
        <title>The full-ORF clone resource of the German cDNA consortium.</title>
        <authorList>
            <person name="Bechtel S."/>
            <person name="Rosenfelder H."/>
            <person name="Duda A."/>
            <person name="Schmidt C.P."/>
            <person name="Ernst U."/>
            <person name="Wellenreuther R."/>
            <person name="Mehrle A."/>
            <person name="Schuster C."/>
            <person name="Bahr A."/>
            <person name="Bloecker H."/>
            <person name="Heubner D."/>
            <person name="Hoerlein A."/>
            <person name="Michel G."/>
            <person name="Wedler H."/>
            <person name="Koehrer K."/>
            <person name="Ottenwaelder B."/>
            <person name="Poustka A."/>
            <person name="Wiemann S."/>
            <person name="Schupp I."/>
        </authorList>
    </citation>
    <scope>NUCLEOTIDE SEQUENCE [LARGE SCALE MRNA]</scope>
    <source>
        <tissue>Kidney</tissue>
    </source>
</reference>
<reference key="6">
    <citation type="journal article" date="2004" name="Genome Res.">
        <title>The status, quality, and expansion of the NIH full-length cDNA project: the Mammalian Gene Collection (MGC).</title>
        <authorList>
            <consortium name="The MGC Project Team"/>
        </authorList>
    </citation>
    <scope>NUCLEOTIDE SEQUENCE [LARGE SCALE MRNA]</scope>
    <source>
        <tissue>Testis</tissue>
    </source>
</reference>
<reference key="7">
    <citation type="journal article" date="2007" name="Science">
        <title>ATM and ATR substrate analysis reveals extensive protein networks responsive to DNA damage.</title>
        <authorList>
            <person name="Matsuoka S."/>
            <person name="Ballif B.A."/>
            <person name="Smogorzewska A."/>
            <person name="McDonald E.R. III"/>
            <person name="Hurov K.E."/>
            <person name="Luo J."/>
            <person name="Bakalarski C.E."/>
            <person name="Zhao Z."/>
            <person name="Solimini N."/>
            <person name="Lerenthal Y."/>
            <person name="Shiloh Y."/>
            <person name="Gygi S.P."/>
            <person name="Elledge S.J."/>
        </authorList>
    </citation>
    <scope>PHOSPHORYLATION [LARGE SCALE ANALYSIS] AT SER-164</scope>
    <scope>IDENTIFICATION BY MASS SPECTROMETRY [LARGE SCALE ANALYSIS]</scope>
    <source>
        <tissue>Embryonic kidney</tissue>
    </source>
</reference>
<reference key="8">
    <citation type="journal article" date="2010" name="Sci. Signal.">
        <title>Quantitative phosphoproteomics reveals widespread full phosphorylation site occupancy during mitosis.</title>
        <authorList>
            <person name="Olsen J.V."/>
            <person name="Vermeulen M."/>
            <person name="Santamaria A."/>
            <person name="Kumar C."/>
            <person name="Miller M.L."/>
            <person name="Jensen L.J."/>
            <person name="Gnad F."/>
            <person name="Cox J."/>
            <person name="Jensen T.S."/>
            <person name="Nigg E.A."/>
            <person name="Brunak S."/>
            <person name="Mann M."/>
        </authorList>
    </citation>
    <scope>PHOSPHORYLATION [LARGE SCALE ANALYSIS] AT SER-56 AND SER-164</scope>
    <scope>IDENTIFICATION BY MASS SPECTROMETRY [LARGE SCALE ANALYSIS]</scope>
    <source>
        <tissue>Cervix carcinoma</tissue>
    </source>
</reference>
<reference key="9">
    <citation type="journal article" date="2011" name="BMC Syst. Biol.">
        <title>Initial characterization of the human central proteome.</title>
        <authorList>
            <person name="Burkard T.R."/>
            <person name="Planyavsky M."/>
            <person name="Kaupe I."/>
            <person name="Breitwieser F.P."/>
            <person name="Buerckstuemmer T."/>
            <person name="Bennett K.L."/>
            <person name="Superti-Furga G."/>
            <person name="Colinge J."/>
        </authorList>
    </citation>
    <scope>IDENTIFICATION BY MASS SPECTROMETRY [LARGE SCALE ANALYSIS]</scope>
</reference>
<feature type="chain" id="PRO_0000252415" description="CGG triplet repeat-binding protein 1">
    <location>
        <begin position="1"/>
        <end position="167"/>
    </location>
</feature>
<feature type="short sequence motif" description="Nuclear localization signal" evidence="1">
    <location>
        <begin position="80"/>
        <end position="84"/>
    </location>
</feature>
<feature type="modified residue" description="Phosphoserine" evidence="6">
    <location>
        <position position="56"/>
    </location>
</feature>
<feature type="modified residue" description="Phosphoserine" evidence="5 6">
    <location>
        <position position="164"/>
    </location>
</feature>
<feature type="sequence conflict" description="In Ref. 2; CAB55894." evidence="4" ref="2">
    <original>Q</original>
    <variation>R</variation>
    <location>
        <position position="165"/>
    </location>
</feature>
<protein>
    <recommendedName>
        <fullName>CGG triplet repeat-binding protein 1</fullName>
        <shortName>CGG-binding protein 1</shortName>
    </recommendedName>
    <alternativeName>
        <fullName>20 kDa CGG-binding protein</fullName>
    </alternativeName>
    <alternativeName>
        <fullName>p20-CGGBP DNA-binding protein</fullName>
    </alternativeName>
</protein>
<dbReference type="EMBL" id="AJ000258">
    <property type="protein sequence ID" value="CAA03974.1"/>
    <property type="molecule type" value="mRNA"/>
</dbReference>
<dbReference type="EMBL" id="AF094481">
    <property type="protein sequence ID" value="AAD04161.1"/>
    <property type="molecule type" value="Genomic_DNA"/>
</dbReference>
<dbReference type="EMBL" id="CR456854">
    <property type="protein sequence ID" value="CAG33135.1"/>
    <property type="molecule type" value="mRNA"/>
</dbReference>
<dbReference type="EMBL" id="AL117392">
    <property type="protein sequence ID" value="CAB55894.1"/>
    <property type="status" value="ALT_FRAME"/>
    <property type="molecule type" value="mRNA"/>
</dbReference>
<dbReference type="EMBL" id="AM393707">
    <property type="protein sequence ID" value="CAL38583.1"/>
    <property type="molecule type" value="mRNA"/>
</dbReference>
<dbReference type="EMBL" id="CH471110">
    <property type="protein sequence ID" value="EAW68863.1"/>
    <property type="molecule type" value="Genomic_DNA"/>
</dbReference>
<dbReference type="EMBL" id="CH471110">
    <property type="protein sequence ID" value="EAW68864.1"/>
    <property type="molecule type" value="Genomic_DNA"/>
</dbReference>
<dbReference type="EMBL" id="BC052980">
    <property type="protein sequence ID" value="AAH52980.1"/>
    <property type="molecule type" value="mRNA"/>
</dbReference>
<dbReference type="CCDS" id="CCDS43111.1"/>
<dbReference type="PIR" id="T17204">
    <property type="entry name" value="T17204"/>
</dbReference>
<dbReference type="RefSeq" id="NP_001008391.1">
    <property type="nucleotide sequence ID" value="NM_001008390.2"/>
</dbReference>
<dbReference type="RefSeq" id="NP_001182237.1">
    <property type="nucleotide sequence ID" value="NM_001195308.2"/>
</dbReference>
<dbReference type="RefSeq" id="NP_003654.3">
    <property type="nucleotide sequence ID" value="NM_003663.3"/>
</dbReference>
<dbReference type="RefSeq" id="XP_016862844.1">
    <property type="nucleotide sequence ID" value="XM_017007355.1"/>
</dbReference>
<dbReference type="SMR" id="Q9UFW8"/>
<dbReference type="BioGRID" id="114115">
    <property type="interactions" value="60"/>
</dbReference>
<dbReference type="FunCoup" id="Q9UFW8">
    <property type="interactions" value="3773"/>
</dbReference>
<dbReference type="IntAct" id="Q9UFW8">
    <property type="interactions" value="37"/>
</dbReference>
<dbReference type="MINT" id="Q9UFW8"/>
<dbReference type="STRING" id="9606.ENSP00000381429"/>
<dbReference type="GlyGen" id="Q9UFW8">
    <property type="glycosylation" value="1 site, 1 O-linked glycan (1 site)"/>
</dbReference>
<dbReference type="iPTMnet" id="Q9UFW8"/>
<dbReference type="PhosphoSitePlus" id="Q9UFW8"/>
<dbReference type="BioMuta" id="CGGBP1"/>
<dbReference type="DMDM" id="116243045"/>
<dbReference type="jPOST" id="Q9UFW8"/>
<dbReference type="MassIVE" id="Q9UFW8"/>
<dbReference type="PaxDb" id="9606-ENSP00000381429"/>
<dbReference type="PeptideAtlas" id="Q9UFW8"/>
<dbReference type="ProteomicsDB" id="84195"/>
<dbReference type="Pumba" id="Q9UFW8"/>
<dbReference type="Antibodypedia" id="32047">
    <property type="antibodies" value="224 antibodies from 29 providers"/>
</dbReference>
<dbReference type="DNASU" id="8545"/>
<dbReference type="Ensembl" id="ENST00000309534.10">
    <property type="protein sequence ID" value="ENSP00000381428.2"/>
    <property type="gene ID" value="ENSG00000163320.12"/>
</dbReference>
<dbReference type="Ensembl" id="ENST00000398392.2">
    <property type="protein sequence ID" value="ENSP00000381429.2"/>
    <property type="gene ID" value="ENSG00000163320.12"/>
</dbReference>
<dbReference type="Ensembl" id="ENST00000462901.5">
    <property type="protein sequence ID" value="ENSP00000418769.1"/>
    <property type="gene ID" value="ENSG00000163320.12"/>
</dbReference>
<dbReference type="Ensembl" id="ENST00000482016.6">
    <property type="protein sequence ID" value="ENSP00000420374.1"/>
    <property type="gene ID" value="ENSG00000163320.12"/>
</dbReference>
<dbReference type="Ensembl" id="ENST00000675130.1">
    <property type="protein sequence ID" value="ENSP00000502581.1"/>
    <property type="gene ID" value="ENSG00000163320.12"/>
</dbReference>
<dbReference type="GeneID" id="8545"/>
<dbReference type="KEGG" id="hsa:8545"/>
<dbReference type="MANE-Select" id="ENST00000482016.6">
    <property type="protein sequence ID" value="ENSP00000420374.1"/>
    <property type="RefSeq nucleotide sequence ID" value="NM_001008390.2"/>
    <property type="RefSeq protein sequence ID" value="NP_001008391.1"/>
</dbReference>
<dbReference type="UCSC" id="uc003dqs.4">
    <property type="organism name" value="human"/>
</dbReference>
<dbReference type="AGR" id="HGNC:1888"/>
<dbReference type="CTD" id="8545"/>
<dbReference type="DisGeNET" id="8545"/>
<dbReference type="GeneCards" id="CGGBP1"/>
<dbReference type="HGNC" id="HGNC:1888">
    <property type="gene designation" value="CGGBP1"/>
</dbReference>
<dbReference type="HPA" id="ENSG00000163320">
    <property type="expression patterns" value="Low tissue specificity"/>
</dbReference>
<dbReference type="MIM" id="603363">
    <property type="type" value="gene"/>
</dbReference>
<dbReference type="neXtProt" id="NX_Q9UFW8"/>
<dbReference type="OpenTargets" id="ENSG00000163320"/>
<dbReference type="PharmGKB" id="PA26441"/>
<dbReference type="VEuPathDB" id="HostDB:ENSG00000163320"/>
<dbReference type="eggNOG" id="ENOG502RXX8">
    <property type="taxonomic scope" value="Eukaryota"/>
</dbReference>
<dbReference type="GeneTree" id="ENSGT00390000017898"/>
<dbReference type="HOGENOM" id="CLU_132996_0_0_1"/>
<dbReference type="InParanoid" id="Q9UFW8"/>
<dbReference type="OMA" id="GKLYCTF"/>
<dbReference type="OrthoDB" id="9434539at2759"/>
<dbReference type="PAN-GO" id="Q9UFW8">
    <property type="GO annotations" value="2 GO annotations based on evolutionary models"/>
</dbReference>
<dbReference type="PhylomeDB" id="Q9UFW8"/>
<dbReference type="TreeFam" id="TF335518"/>
<dbReference type="PathwayCommons" id="Q9UFW8"/>
<dbReference type="SignaLink" id="Q9UFW8"/>
<dbReference type="BioGRID-ORCS" id="8545">
    <property type="hits" value="19 hits in 1167 CRISPR screens"/>
</dbReference>
<dbReference type="ChiTaRS" id="CGGBP1">
    <property type="organism name" value="human"/>
</dbReference>
<dbReference type="GeneWiki" id="CGGBP1"/>
<dbReference type="GenomeRNAi" id="8545"/>
<dbReference type="Pharos" id="Q9UFW8">
    <property type="development level" value="Tbio"/>
</dbReference>
<dbReference type="PRO" id="PR:Q9UFW8"/>
<dbReference type="Proteomes" id="UP000005640">
    <property type="component" value="Chromosome 3"/>
</dbReference>
<dbReference type="RNAct" id="Q9UFW8">
    <property type="molecule type" value="protein"/>
</dbReference>
<dbReference type="Bgee" id="ENSG00000163320">
    <property type="expression patterns" value="Expressed in germinal epithelium of ovary and 207 other cell types or tissues"/>
</dbReference>
<dbReference type="ExpressionAtlas" id="Q9UFW8">
    <property type="expression patterns" value="baseline and differential"/>
</dbReference>
<dbReference type="GO" id="GO:0005829">
    <property type="term" value="C:cytosol"/>
    <property type="evidence" value="ECO:0000314"/>
    <property type="project" value="HPA"/>
</dbReference>
<dbReference type="GO" id="GO:0005654">
    <property type="term" value="C:nucleoplasm"/>
    <property type="evidence" value="ECO:0000314"/>
    <property type="project" value="HPA"/>
</dbReference>
<dbReference type="GO" id="GO:0005634">
    <property type="term" value="C:nucleus"/>
    <property type="evidence" value="ECO:0000314"/>
    <property type="project" value="LIFEdb"/>
</dbReference>
<dbReference type="GO" id="GO:0140297">
    <property type="term" value="F:DNA-binding transcription factor binding"/>
    <property type="evidence" value="ECO:0000353"/>
    <property type="project" value="ARUK-UCL"/>
</dbReference>
<dbReference type="GO" id="GO:0003690">
    <property type="term" value="F:double-stranded DNA binding"/>
    <property type="evidence" value="ECO:0000314"/>
    <property type="project" value="ARUK-UCL"/>
</dbReference>
<dbReference type="GO" id="GO:0042802">
    <property type="term" value="F:identical protein binding"/>
    <property type="evidence" value="ECO:0000353"/>
    <property type="project" value="IntAct"/>
</dbReference>
<dbReference type="GO" id="GO:0040029">
    <property type="term" value="P:epigenetic regulation of gene expression"/>
    <property type="evidence" value="ECO:0000314"/>
    <property type="project" value="ARUK-UCL"/>
</dbReference>
<dbReference type="GO" id="GO:0000122">
    <property type="term" value="P:negative regulation of transcription by RNA polymerase II"/>
    <property type="evidence" value="ECO:0000314"/>
    <property type="project" value="NTNU_SB"/>
</dbReference>
<dbReference type="GO" id="GO:0010468">
    <property type="term" value="P:regulation of gene expression"/>
    <property type="evidence" value="ECO:0000318"/>
    <property type="project" value="GO_Central"/>
</dbReference>
<dbReference type="InterPro" id="IPR033375">
    <property type="entry name" value="Cggbp1"/>
</dbReference>
<dbReference type="PANTHER" id="PTHR32344">
    <property type="entry name" value="U1-TYPE DOMAIN-CONTAINING PROTEIN"/>
    <property type="match status" value="1"/>
</dbReference>
<dbReference type="PANTHER" id="PTHR32344:SF1">
    <property type="entry name" value="U1-TYPE DOMAIN-CONTAINING PROTEIN"/>
    <property type="match status" value="1"/>
</dbReference>
<name>CGBP1_HUMAN</name>
<sequence length="167" mass="18820">MERFVVTAPPARNRSKTALYVTPLDRVTEFGGELHEDGGKLFCTSCNVVLNHVRKSAISDHLKSKTHTKRKAEFEEQNVRKKQRPLTASLQCNSTAQTEKVSVIQDFVKMCLEANIPLEKADHPAVRAFLSRHVKNGGSIPKSDQLRRAYLPDGYENENQLLNSQDC</sequence>
<evidence type="ECO:0000255" key="1"/>
<evidence type="ECO:0000269" key="2">
    <source>
    </source>
</evidence>
<evidence type="ECO:0000269" key="3">
    <source>
    </source>
</evidence>
<evidence type="ECO:0000305" key="4"/>
<evidence type="ECO:0007744" key="5">
    <source>
    </source>
</evidence>
<evidence type="ECO:0007744" key="6">
    <source>
    </source>
</evidence>
<gene>
    <name type="primary">CGGBP1</name>
    <name type="synonym">CGGBP</name>
</gene>
<keyword id="KW-0903">Direct protein sequencing</keyword>
<keyword id="KW-0238">DNA-binding</keyword>
<keyword id="KW-0539">Nucleus</keyword>
<keyword id="KW-0597">Phosphoprotein</keyword>
<keyword id="KW-1267">Proteomics identification</keyword>
<keyword id="KW-1185">Reference proteome</keyword>
<keyword id="KW-0804">Transcription</keyword>
<keyword id="KW-0805">Transcription regulation</keyword>
<proteinExistence type="evidence at protein level"/>
<accession>Q9UFW8</accession>
<accession>D3DU38</accession>
<accession>O15183</accession>